<evidence type="ECO:0000255" key="1"/>
<evidence type="ECO:0000255" key="2">
    <source>
        <dbReference type="PROSITE-ProRule" id="PRU00096"/>
    </source>
</evidence>
<evidence type="ECO:0000269" key="3">
    <source>
    </source>
</evidence>
<evidence type="ECO:0000269" key="4">
    <source>
    </source>
</evidence>
<evidence type="ECO:0000269" key="5">
    <source>
    </source>
</evidence>
<evidence type="ECO:0000269" key="6">
    <source>
    </source>
</evidence>
<evidence type="ECO:0000303" key="7">
    <source ref="3"/>
</evidence>
<evidence type="ECO:0000305" key="8"/>
<evidence type="ECO:0007744" key="9">
    <source>
    </source>
</evidence>
<dbReference type="EMBL" id="AF151858">
    <property type="protein sequence ID" value="AAD34095.1"/>
    <property type="molecule type" value="mRNA"/>
</dbReference>
<dbReference type="EMBL" id="AY359039">
    <property type="protein sequence ID" value="AAQ89398.1"/>
    <property type="molecule type" value="mRNA"/>
</dbReference>
<dbReference type="EMBL" id="BX379269">
    <property type="status" value="NOT_ANNOTATED_CDS"/>
    <property type="molecule type" value="mRNA"/>
</dbReference>
<dbReference type="EMBL" id="AK312787">
    <property type="protein sequence ID" value="BAG35650.1"/>
    <property type="molecule type" value="mRNA"/>
</dbReference>
<dbReference type="EMBL" id="AC126124">
    <property type="status" value="NOT_ANNOTATED_CDS"/>
    <property type="molecule type" value="Genomic_DNA"/>
</dbReference>
<dbReference type="EMBL" id="AL117354">
    <property type="status" value="NOT_ANNOTATED_CDS"/>
    <property type="molecule type" value="Genomic_DNA"/>
</dbReference>
<dbReference type="EMBL" id="CH471097">
    <property type="protein sequence ID" value="EAW73081.1"/>
    <property type="molecule type" value="Genomic_DNA"/>
</dbReference>
<dbReference type="EMBL" id="CH471097">
    <property type="protein sequence ID" value="EAW73082.1"/>
    <property type="molecule type" value="Genomic_DNA"/>
</dbReference>
<dbReference type="EMBL" id="BC016365">
    <property type="protein sequence ID" value="AAH16365.1"/>
    <property type="molecule type" value="mRNA"/>
</dbReference>
<dbReference type="EMBL" id="BC016556">
    <property type="protein sequence ID" value="AAH16556.1"/>
    <property type="molecule type" value="mRNA"/>
</dbReference>
<dbReference type="EMBL" id="BC070051">
    <property type="protein sequence ID" value="AAH70051.1"/>
    <property type="molecule type" value="mRNA"/>
</dbReference>
<dbReference type="CCDS" id="CCDS53342.1">
    <molecule id="Q9Y3A6-2"/>
</dbReference>
<dbReference type="CCDS" id="CCDS743.1">
    <molecule id="Q9Y3A6-1"/>
</dbReference>
<dbReference type="RefSeq" id="NP_001161302.1">
    <molecule id="Q9Y3A6-2"/>
    <property type="nucleotide sequence ID" value="NM_001167830.2"/>
</dbReference>
<dbReference type="RefSeq" id="NP_057124.3">
    <molecule id="Q9Y3A6-1"/>
    <property type="nucleotide sequence ID" value="NM_016040.4"/>
</dbReference>
<dbReference type="SMR" id="Q9Y3A6"/>
<dbReference type="BioGRID" id="119207">
    <property type="interactions" value="79"/>
</dbReference>
<dbReference type="FunCoup" id="Q9Y3A6">
    <property type="interactions" value="2529"/>
</dbReference>
<dbReference type="IntAct" id="Q9Y3A6">
    <property type="interactions" value="61"/>
</dbReference>
<dbReference type="MINT" id="Q9Y3A6"/>
<dbReference type="STRING" id="9606.ENSP00000359305"/>
<dbReference type="GlyGen" id="Q9Y3A6">
    <property type="glycosylation" value="1 site, 1 O-linked glycan (1 site)"/>
</dbReference>
<dbReference type="iPTMnet" id="Q9Y3A6"/>
<dbReference type="PhosphoSitePlus" id="Q9Y3A6"/>
<dbReference type="BioMuta" id="TMED5"/>
<dbReference type="DMDM" id="12585534"/>
<dbReference type="jPOST" id="Q9Y3A6"/>
<dbReference type="MassIVE" id="Q9Y3A6"/>
<dbReference type="PaxDb" id="9606-ENSP00000359305"/>
<dbReference type="PeptideAtlas" id="Q9Y3A6"/>
<dbReference type="ProteomicsDB" id="3107"/>
<dbReference type="ProteomicsDB" id="85998">
    <molecule id="Q9Y3A6-1"/>
</dbReference>
<dbReference type="Pumba" id="Q9Y3A6"/>
<dbReference type="TopDownProteomics" id="Q9Y3A6-1">
    <molecule id="Q9Y3A6-1"/>
</dbReference>
<dbReference type="Antibodypedia" id="33655">
    <property type="antibodies" value="41 antibodies from 17 providers"/>
</dbReference>
<dbReference type="DNASU" id="50999"/>
<dbReference type="Ensembl" id="ENST00000370282.8">
    <molecule id="Q9Y3A6-1"/>
    <property type="protein sequence ID" value="ENSP00000359305.3"/>
    <property type="gene ID" value="ENSG00000117500.13"/>
</dbReference>
<dbReference type="Ensembl" id="ENST00000479918.5">
    <molecule id="Q9Y3A6-2"/>
    <property type="protein sequence ID" value="ENSP00000418992.1"/>
    <property type="gene ID" value="ENSG00000117500.13"/>
</dbReference>
<dbReference type="GeneID" id="50999"/>
<dbReference type="KEGG" id="hsa:50999"/>
<dbReference type="MANE-Select" id="ENST00000370282.8">
    <property type="protein sequence ID" value="ENSP00000359305.3"/>
    <property type="RefSeq nucleotide sequence ID" value="NM_016040.5"/>
    <property type="RefSeq protein sequence ID" value="NP_057124.3"/>
</dbReference>
<dbReference type="UCSC" id="uc001dpn.4">
    <molecule id="Q9Y3A6-1"/>
    <property type="organism name" value="human"/>
</dbReference>
<dbReference type="AGR" id="HGNC:24251"/>
<dbReference type="CTD" id="50999"/>
<dbReference type="DisGeNET" id="50999"/>
<dbReference type="GeneCards" id="TMED5"/>
<dbReference type="HGNC" id="HGNC:24251">
    <property type="gene designation" value="TMED5"/>
</dbReference>
<dbReference type="HPA" id="ENSG00000117500">
    <property type="expression patterns" value="Low tissue specificity"/>
</dbReference>
<dbReference type="MIM" id="616876">
    <property type="type" value="gene"/>
</dbReference>
<dbReference type="neXtProt" id="NX_Q9Y3A6"/>
<dbReference type="OpenTargets" id="ENSG00000117500"/>
<dbReference type="PharmGKB" id="PA134942067"/>
<dbReference type="VEuPathDB" id="HostDB:ENSG00000117500"/>
<dbReference type="eggNOG" id="KOG3287">
    <property type="taxonomic scope" value="Eukaryota"/>
</dbReference>
<dbReference type="GeneTree" id="ENSGT00940000155468"/>
<dbReference type="HOGENOM" id="CLU_066963_0_0_1"/>
<dbReference type="InParanoid" id="Q9Y3A6"/>
<dbReference type="OMA" id="GQDQEDW"/>
<dbReference type="OrthoDB" id="5976732at2759"/>
<dbReference type="PAN-GO" id="Q9Y3A6">
    <property type="GO annotations" value="7 GO annotations based on evolutionary models"/>
</dbReference>
<dbReference type="PhylomeDB" id="Q9Y3A6"/>
<dbReference type="TreeFam" id="TF313000"/>
<dbReference type="PathwayCommons" id="Q9Y3A6"/>
<dbReference type="Reactome" id="R-HSA-3238698">
    <property type="pathway name" value="WNT ligand biogenesis and trafficking"/>
</dbReference>
<dbReference type="SignaLink" id="Q9Y3A6"/>
<dbReference type="SIGNOR" id="Q9Y3A6"/>
<dbReference type="BioGRID-ORCS" id="50999">
    <property type="hits" value="22 hits in 1164 CRISPR screens"/>
</dbReference>
<dbReference type="ChiTaRS" id="TMED5">
    <property type="organism name" value="human"/>
</dbReference>
<dbReference type="GenomeRNAi" id="50999"/>
<dbReference type="Pharos" id="Q9Y3A6">
    <property type="development level" value="Tdark"/>
</dbReference>
<dbReference type="PRO" id="PR:Q9Y3A6"/>
<dbReference type="Proteomes" id="UP000005640">
    <property type="component" value="Chromosome 1"/>
</dbReference>
<dbReference type="RNAct" id="Q9Y3A6">
    <property type="molecule type" value="protein"/>
</dbReference>
<dbReference type="Bgee" id="ENSG00000117500">
    <property type="expression patterns" value="Expressed in skeletal muscle tissue of biceps brachii and 215 other cell types or tissues"/>
</dbReference>
<dbReference type="ExpressionAtlas" id="Q9Y3A6">
    <property type="expression patterns" value="baseline and differential"/>
</dbReference>
<dbReference type="GO" id="GO:0005801">
    <property type="term" value="C:cis-Golgi network"/>
    <property type="evidence" value="ECO:0000314"/>
    <property type="project" value="UniProtKB"/>
</dbReference>
<dbReference type="GO" id="GO:0030134">
    <property type="term" value="C:COPII-coated ER to Golgi transport vesicle"/>
    <property type="evidence" value="ECO:0000318"/>
    <property type="project" value="GO_Central"/>
</dbReference>
<dbReference type="GO" id="GO:0005783">
    <property type="term" value="C:endoplasmic reticulum"/>
    <property type="evidence" value="ECO:0000318"/>
    <property type="project" value="GO_Central"/>
</dbReference>
<dbReference type="GO" id="GO:0070971">
    <property type="term" value="C:endoplasmic reticulum exit site"/>
    <property type="evidence" value="ECO:0000314"/>
    <property type="project" value="UniProtKB"/>
</dbReference>
<dbReference type="GO" id="GO:0005789">
    <property type="term" value="C:endoplasmic reticulum membrane"/>
    <property type="evidence" value="ECO:0007669"/>
    <property type="project" value="UniProtKB-SubCell"/>
</dbReference>
<dbReference type="GO" id="GO:0005793">
    <property type="term" value="C:endoplasmic reticulum-Golgi intermediate compartment"/>
    <property type="evidence" value="ECO:0000314"/>
    <property type="project" value="UniProtKB"/>
</dbReference>
<dbReference type="GO" id="GO:0033116">
    <property type="term" value="C:endoplasmic reticulum-Golgi intermediate compartment membrane"/>
    <property type="evidence" value="ECO:0007669"/>
    <property type="project" value="UniProtKB-SubCell"/>
</dbReference>
<dbReference type="GO" id="GO:0005794">
    <property type="term" value="C:Golgi apparatus"/>
    <property type="evidence" value="ECO:0000318"/>
    <property type="project" value="GO_Central"/>
</dbReference>
<dbReference type="GO" id="GO:0006888">
    <property type="term" value="P:endoplasmic reticulum to Golgi vesicle-mediated transport"/>
    <property type="evidence" value="ECO:0000318"/>
    <property type="project" value="GO_Central"/>
</dbReference>
<dbReference type="GO" id="GO:0090161">
    <property type="term" value="P:Golgi ribbon formation"/>
    <property type="evidence" value="ECO:0000315"/>
    <property type="project" value="UniProtKB"/>
</dbReference>
<dbReference type="GO" id="GO:0006886">
    <property type="term" value="P:intracellular protein transport"/>
    <property type="evidence" value="ECO:0000318"/>
    <property type="project" value="GO_Central"/>
</dbReference>
<dbReference type="InterPro" id="IPR015720">
    <property type="entry name" value="Emp24-like"/>
</dbReference>
<dbReference type="InterPro" id="IPR009038">
    <property type="entry name" value="GOLD_dom"/>
</dbReference>
<dbReference type="InterPro" id="IPR036598">
    <property type="entry name" value="GOLD_dom_sf"/>
</dbReference>
<dbReference type="PANTHER" id="PTHR22811">
    <property type="entry name" value="TRANSMEMBRANE EMP24 DOMAIN-CONTAINING PROTEIN"/>
    <property type="match status" value="1"/>
</dbReference>
<dbReference type="Pfam" id="PF01105">
    <property type="entry name" value="EMP24_GP25L"/>
    <property type="match status" value="1"/>
</dbReference>
<dbReference type="SMART" id="SM01190">
    <property type="entry name" value="EMP24_GP25L"/>
    <property type="match status" value="1"/>
</dbReference>
<dbReference type="SUPFAM" id="SSF101576">
    <property type="entry name" value="Supernatant protein factor (SPF), C-terminal domain"/>
    <property type="match status" value="1"/>
</dbReference>
<dbReference type="PROSITE" id="PS50866">
    <property type="entry name" value="GOLD"/>
    <property type="match status" value="1"/>
</dbReference>
<sequence>MGDKIWLPFPVLLLAALPPVLLPGAAGFTPSLDSDFTFTLPAGQKECFYQPMPLKASLEIEYQVLDGAGLDIDFHLASPEGKTLVFEQRKSDGVHTVETEVGDYMFCFDNTFSTISEKVIFFELILDNMGEQAQEQEDWKKYITGTDILDMKLEDILESINSIKSRLSKSGHIQTLLRAFEARDRNIQESNFDRVNFWSMVNLVVMVVVSAIQVYMLKSLFEDKRKSRT</sequence>
<accession>Q9Y3A6</accession>
<accession>B1AKT4</accession>
<accession>B2R703</accession>
<accession>D3DT38</accession>
<accession>Q96AX8</accession>
<reference key="1">
    <citation type="journal article" date="2000" name="Genome Res.">
        <title>Identification of novel human genes evolutionarily conserved in Caenorhabditis elegans by comparative proteomics.</title>
        <authorList>
            <person name="Lai C.-H."/>
            <person name="Chou C.-Y."/>
            <person name="Ch'ang L.-Y."/>
            <person name="Liu C.-S."/>
            <person name="Lin W.-C."/>
        </authorList>
    </citation>
    <scope>NUCLEOTIDE SEQUENCE [LARGE SCALE MRNA] (ISOFORM 1)</scope>
</reference>
<reference key="2">
    <citation type="journal article" date="2003" name="Genome Res.">
        <title>The secreted protein discovery initiative (SPDI), a large-scale effort to identify novel human secreted and transmembrane proteins: a bioinformatics assessment.</title>
        <authorList>
            <person name="Clark H.F."/>
            <person name="Gurney A.L."/>
            <person name="Abaya E."/>
            <person name="Baker K."/>
            <person name="Baldwin D.T."/>
            <person name="Brush J."/>
            <person name="Chen J."/>
            <person name="Chow B."/>
            <person name="Chui C."/>
            <person name="Crowley C."/>
            <person name="Currell B."/>
            <person name="Deuel B."/>
            <person name="Dowd P."/>
            <person name="Eaton D."/>
            <person name="Foster J.S."/>
            <person name="Grimaldi C."/>
            <person name="Gu Q."/>
            <person name="Hass P.E."/>
            <person name="Heldens S."/>
            <person name="Huang A."/>
            <person name="Kim H.S."/>
            <person name="Klimowski L."/>
            <person name="Jin Y."/>
            <person name="Johnson S."/>
            <person name="Lee J."/>
            <person name="Lewis L."/>
            <person name="Liao D."/>
            <person name="Mark M.R."/>
            <person name="Robbie E."/>
            <person name="Sanchez C."/>
            <person name="Schoenfeld J."/>
            <person name="Seshagiri S."/>
            <person name="Simmons L."/>
            <person name="Singh J."/>
            <person name="Smith V."/>
            <person name="Stinson J."/>
            <person name="Vagts A."/>
            <person name="Vandlen R.L."/>
            <person name="Watanabe C."/>
            <person name="Wieand D."/>
            <person name="Woods K."/>
            <person name="Xie M.-H."/>
            <person name="Yansura D.G."/>
            <person name="Yi S."/>
            <person name="Yu G."/>
            <person name="Yuan J."/>
            <person name="Zhang M."/>
            <person name="Zhang Z."/>
            <person name="Goddard A.D."/>
            <person name="Wood W.I."/>
            <person name="Godowski P.J."/>
            <person name="Gray A.M."/>
        </authorList>
    </citation>
    <scope>NUCLEOTIDE SEQUENCE [LARGE SCALE MRNA] (ISOFORM 1)</scope>
    <scope>VARIANT ILE-175</scope>
</reference>
<reference key="3">
    <citation type="submission" date="2003-04" db="EMBL/GenBank/DDBJ databases">
        <title>Full-length cDNA libraries and normalization.</title>
        <authorList>
            <person name="Li W.B."/>
            <person name="Gruber C."/>
            <person name="Jessee J."/>
            <person name="Polayes D."/>
        </authorList>
    </citation>
    <scope>NUCLEOTIDE SEQUENCE [LARGE SCALE MRNA] (ISOFORM 2)</scope>
    <source>
        <tissue>Placenta</tissue>
    </source>
</reference>
<reference key="4">
    <citation type="journal article" date="2004" name="Nat. Genet.">
        <title>Complete sequencing and characterization of 21,243 full-length human cDNAs.</title>
        <authorList>
            <person name="Ota T."/>
            <person name="Suzuki Y."/>
            <person name="Nishikawa T."/>
            <person name="Otsuki T."/>
            <person name="Sugiyama T."/>
            <person name="Irie R."/>
            <person name="Wakamatsu A."/>
            <person name="Hayashi K."/>
            <person name="Sato H."/>
            <person name="Nagai K."/>
            <person name="Kimura K."/>
            <person name="Makita H."/>
            <person name="Sekine M."/>
            <person name="Obayashi M."/>
            <person name="Nishi T."/>
            <person name="Shibahara T."/>
            <person name="Tanaka T."/>
            <person name="Ishii S."/>
            <person name="Yamamoto J."/>
            <person name="Saito K."/>
            <person name="Kawai Y."/>
            <person name="Isono Y."/>
            <person name="Nakamura Y."/>
            <person name="Nagahari K."/>
            <person name="Murakami K."/>
            <person name="Yasuda T."/>
            <person name="Iwayanagi T."/>
            <person name="Wagatsuma M."/>
            <person name="Shiratori A."/>
            <person name="Sudo H."/>
            <person name="Hosoiri T."/>
            <person name="Kaku Y."/>
            <person name="Kodaira H."/>
            <person name="Kondo H."/>
            <person name="Sugawara M."/>
            <person name="Takahashi M."/>
            <person name="Kanda K."/>
            <person name="Yokoi T."/>
            <person name="Furuya T."/>
            <person name="Kikkawa E."/>
            <person name="Omura Y."/>
            <person name="Abe K."/>
            <person name="Kamihara K."/>
            <person name="Katsuta N."/>
            <person name="Sato K."/>
            <person name="Tanikawa M."/>
            <person name="Yamazaki M."/>
            <person name="Ninomiya K."/>
            <person name="Ishibashi T."/>
            <person name="Yamashita H."/>
            <person name="Murakawa K."/>
            <person name="Fujimori K."/>
            <person name="Tanai H."/>
            <person name="Kimata M."/>
            <person name="Watanabe M."/>
            <person name="Hiraoka S."/>
            <person name="Chiba Y."/>
            <person name="Ishida S."/>
            <person name="Ono Y."/>
            <person name="Takiguchi S."/>
            <person name="Watanabe S."/>
            <person name="Yosida M."/>
            <person name="Hotuta T."/>
            <person name="Kusano J."/>
            <person name="Kanehori K."/>
            <person name="Takahashi-Fujii A."/>
            <person name="Hara H."/>
            <person name="Tanase T.-O."/>
            <person name="Nomura Y."/>
            <person name="Togiya S."/>
            <person name="Komai F."/>
            <person name="Hara R."/>
            <person name="Takeuchi K."/>
            <person name="Arita M."/>
            <person name="Imose N."/>
            <person name="Musashino K."/>
            <person name="Yuuki H."/>
            <person name="Oshima A."/>
            <person name="Sasaki N."/>
            <person name="Aotsuka S."/>
            <person name="Yoshikawa Y."/>
            <person name="Matsunawa H."/>
            <person name="Ichihara T."/>
            <person name="Shiohata N."/>
            <person name="Sano S."/>
            <person name="Moriya S."/>
            <person name="Momiyama H."/>
            <person name="Satoh N."/>
            <person name="Takami S."/>
            <person name="Terashima Y."/>
            <person name="Suzuki O."/>
            <person name="Nakagawa S."/>
            <person name="Senoh A."/>
            <person name="Mizoguchi H."/>
            <person name="Goto Y."/>
            <person name="Shimizu F."/>
            <person name="Wakebe H."/>
            <person name="Hishigaki H."/>
            <person name="Watanabe T."/>
            <person name="Sugiyama A."/>
            <person name="Takemoto M."/>
            <person name="Kawakami B."/>
            <person name="Yamazaki M."/>
            <person name="Watanabe K."/>
            <person name="Kumagai A."/>
            <person name="Itakura S."/>
            <person name="Fukuzumi Y."/>
            <person name="Fujimori Y."/>
            <person name="Komiyama M."/>
            <person name="Tashiro H."/>
            <person name="Tanigami A."/>
            <person name="Fujiwara T."/>
            <person name="Ono T."/>
            <person name="Yamada K."/>
            <person name="Fujii Y."/>
            <person name="Ozaki K."/>
            <person name="Hirao M."/>
            <person name="Ohmori Y."/>
            <person name="Kawabata A."/>
            <person name="Hikiji T."/>
            <person name="Kobatake N."/>
            <person name="Inagaki H."/>
            <person name="Ikema Y."/>
            <person name="Okamoto S."/>
            <person name="Okitani R."/>
            <person name="Kawakami T."/>
            <person name="Noguchi S."/>
            <person name="Itoh T."/>
            <person name="Shigeta K."/>
            <person name="Senba T."/>
            <person name="Matsumura K."/>
            <person name="Nakajima Y."/>
            <person name="Mizuno T."/>
            <person name="Morinaga M."/>
            <person name="Sasaki M."/>
            <person name="Togashi T."/>
            <person name="Oyama M."/>
            <person name="Hata H."/>
            <person name="Watanabe M."/>
            <person name="Komatsu T."/>
            <person name="Mizushima-Sugano J."/>
            <person name="Satoh T."/>
            <person name="Shirai Y."/>
            <person name="Takahashi Y."/>
            <person name="Nakagawa K."/>
            <person name="Okumura K."/>
            <person name="Nagase T."/>
            <person name="Nomura N."/>
            <person name="Kikuchi H."/>
            <person name="Masuho Y."/>
            <person name="Yamashita R."/>
            <person name="Nakai K."/>
            <person name="Yada T."/>
            <person name="Nakamura Y."/>
            <person name="Ohara O."/>
            <person name="Isogai T."/>
            <person name="Sugano S."/>
        </authorList>
    </citation>
    <scope>NUCLEOTIDE SEQUENCE [LARGE SCALE MRNA] (ISOFORM 1)</scope>
    <scope>VARIANT ILE-175</scope>
    <source>
        <tissue>Testis</tissue>
    </source>
</reference>
<reference key="5">
    <citation type="journal article" date="2006" name="Nature">
        <title>The DNA sequence and biological annotation of human chromosome 1.</title>
        <authorList>
            <person name="Gregory S.G."/>
            <person name="Barlow K.F."/>
            <person name="McLay K.E."/>
            <person name="Kaul R."/>
            <person name="Swarbreck D."/>
            <person name="Dunham A."/>
            <person name="Scott C.E."/>
            <person name="Howe K.L."/>
            <person name="Woodfine K."/>
            <person name="Spencer C.C.A."/>
            <person name="Jones M.C."/>
            <person name="Gillson C."/>
            <person name="Searle S."/>
            <person name="Zhou Y."/>
            <person name="Kokocinski F."/>
            <person name="McDonald L."/>
            <person name="Evans R."/>
            <person name="Phillips K."/>
            <person name="Atkinson A."/>
            <person name="Cooper R."/>
            <person name="Jones C."/>
            <person name="Hall R.E."/>
            <person name="Andrews T.D."/>
            <person name="Lloyd C."/>
            <person name="Ainscough R."/>
            <person name="Almeida J.P."/>
            <person name="Ambrose K.D."/>
            <person name="Anderson F."/>
            <person name="Andrew R.W."/>
            <person name="Ashwell R.I.S."/>
            <person name="Aubin K."/>
            <person name="Babbage A.K."/>
            <person name="Bagguley C.L."/>
            <person name="Bailey J."/>
            <person name="Beasley H."/>
            <person name="Bethel G."/>
            <person name="Bird C.P."/>
            <person name="Bray-Allen S."/>
            <person name="Brown J.Y."/>
            <person name="Brown A.J."/>
            <person name="Buckley D."/>
            <person name="Burton J."/>
            <person name="Bye J."/>
            <person name="Carder C."/>
            <person name="Chapman J.C."/>
            <person name="Clark S.Y."/>
            <person name="Clarke G."/>
            <person name="Clee C."/>
            <person name="Cobley V."/>
            <person name="Collier R.E."/>
            <person name="Corby N."/>
            <person name="Coville G.J."/>
            <person name="Davies J."/>
            <person name="Deadman R."/>
            <person name="Dunn M."/>
            <person name="Earthrowl M."/>
            <person name="Ellington A.G."/>
            <person name="Errington H."/>
            <person name="Frankish A."/>
            <person name="Frankland J."/>
            <person name="French L."/>
            <person name="Garner P."/>
            <person name="Garnett J."/>
            <person name="Gay L."/>
            <person name="Ghori M.R.J."/>
            <person name="Gibson R."/>
            <person name="Gilby L.M."/>
            <person name="Gillett W."/>
            <person name="Glithero R.J."/>
            <person name="Grafham D.V."/>
            <person name="Griffiths C."/>
            <person name="Griffiths-Jones S."/>
            <person name="Grocock R."/>
            <person name="Hammond S."/>
            <person name="Harrison E.S.I."/>
            <person name="Hart E."/>
            <person name="Haugen E."/>
            <person name="Heath P.D."/>
            <person name="Holmes S."/>
            <person name="Holt K."/>
            <person name="Howden P.J."/>
            <person name="Hunt A.R."/>
            <person name="Hunt S.E."/>
            <person name="Hunter G."/>
            <person name="Isherwood J."/>
            <person name="James R."/>
            <person name="Johnson C."/>
            <person name="Johnson D."/>
            <person name="Joy A."/>
            <person name="Kay M."/>
            <person name="Kershaw J.K."/>
            <person name="Kibukawa M."/>
            <person name="Kimberley A.M."/>
            <person name="King A."/>
            <person name="Knights A.J."/>
            <person name="Lad H."/>
            <person name="Laird G."/>
            <person name="Lawlor S."/>
            <person name="Leongamornlert D.A."/>
            <person name="Lloyd D.M."/>
            <person name="Loveland J."/>
            <person name="Lovell J."/>
            <person name="Lush M.J."/>
            <person name="Lyne R."/>
            <person name="Martin S."/>
            <person name="Mashreghi-Mohammadi M."/>
            <person name="Matthews L."/>
            <person name="Matthews N.S.W."/>
            <person name="McLaren S."/>
            <person name="Milne S."/>
            <person name="Mistry S."/>
            <person name="Moore M.J.F."/>
            <person name="Nickerson T."/>
            <person name="O'Dell C.N."/>
            <person name="Oliver K."/>
            <person name="Palmeiri A."/>
            <person name="Palmer S.A."/>
            <person name="Parker A."/>
            <person name="Patel D."/>
            <person name="Pearce A.V."/>
            <person name="Peck A.I."/>
            <person name="Pelan S."/>
            <person name="Phelps K."/>
            <person name="Phillimore B.J."/>
            <person name="Plumb R."/>
            <person name="Rajan J."/>
            <person name="Raymond C."/>
            <person name="Rouse G."/>
            <person name="Saenphimmachak C."/>
            <person name="Sehra H.K."/>
            <person name="Sheridan E."/>
            <person name="Shownkeen R."/>
            <person name="Sims S."/>
            <person name="Skuce C.D."/>
            <person name="Smith M."/>
            <person name="Steward C."/>
            <person name="Subramanian S."/>
            <person name="Sycamore N."/>
            <person name="Tracey A."/>
            <person name="Tromans A."/>
            <person name="Van Helmond Z."/>
            <person name="Wall M."/>
            <person name="Wallis J.M."/>
            <person name="White S."/>
            <person name="Whitehead S.L."/>
            <person name="Wilkinson J.E."/>
            <person name="Willey D.L."/>
            <person name="Williams H."/>
            <person name="Wilming L."/>
            <person name="Wray P.W."/>
            <person name="Wu Z."/>
            <person name="Coulson A."/>
            <person name="Vaudin M."/>
            <person name="Sulston J.E."/>
            <person name="Durbin R.M."/>
            <person name="Hubbard T."/>
            <person name="Wooster R."/>
            <person name="Dunham I."/>
            <person name="Carter N.P."/>
            <person name="McVean G."/>
            <person name="Ross M.T."/>
            <person name="Harrow J."/>
            <person name="Olson M.V."/>
            <person name="Beck S."/>
            <person name="Rogers J."/>
            <person name="Bentley D.R."/>
        </authorList>
    </citation>
    <scope>NUCLEOTIDE SEQUENCE [LARGE SCALE GENOMIC DNA]</scope>
</reference>
<reference key="6">
    <citation type="submission" date="2005-09" db="EMBL/GenBank/DDBJ databases">
        <authorList>
            <person name="Mural R.J."/>
            <person name="Istrail S."/>
            <person name="Sutton G.G."/>
            <person name="Florea L."/>
            <person name="Halpern A.L."/>
            <person name="Mobarry C.M."/>
            <person name="Lippert R."/>
            <person name="Walenz B."/>
            <person name="Shatkay H."/>
            <person name="Dew I."/>
            <person name="Miller J.R."/>
            <person name="Flanigan M.J."/>
            <person name="Edwards N.J."/>
            <person name="Bolanos R."/>
            <person name="Fasulo D."/>
            <person name="Halldorsson B.V."/>
            <person name="Hannenhalli S."/>
            <person name="Turner R."/>
            <person name="Yooseph S."/>
            <person name="Lu F."/>
            <person name="Nusskern D.R."/>
            <person name="Shue B.C."/>
            <person name="Zheng X.H."/>
            <person name="Zhong F."/>
            <person name="Delcher A.L."/>
            <person name="Huson D.H."/>
            <person name="Kravitz S.A."/>
            <person name="Mouchard L."/>
            <person name="Reinert K."/>
            <person name="Remington K.A."/>
            <person name="Clark A.G."/>
            <person name="Waterman M.S."/>
            <person name="Eichler E.E."/>
            <person name="Adams M.D."/>
            <person name="Hunkapiller M.W."/>
            <person name="Myers E.W."/>
            <person name="Venter J.C."/>
        </authorList>
    </citation>
    <scope>NUCLEOTIDE SEQUENCE [LARGE SCALE GENOMIC DNA]</scope>
</reference>
<reference key="7">
    <citation type="journal article" date="2004" name="Genome Res.">
        <title>The status, quality, and expansion of the NIH full-length cDNA project: the Mammalian Gene Collection (MGC).</title>
        <authorList>
            <consortium name="The MGC Project Team"/>
        </authorList>
    </citation>
    <scope>NUCLEOTIDE SEQUENCE [LARGE SCALE MRNA] (ISOFORM 1)</scope>
    <scope>VARIANT ILE-175</scope>
    <source>
        <tissue>Bone marrow</tissue>
        <tissue>Brain</tissue>
        <tissue>Placenta</tissue>
    </source>
</reference>
<reference key="8">
    <citation type="journal article" date="2010" name="Traffic">
        <title>p28, a novel ERGIC/cis Golgi protein, required for Golgi ribbon formation.</title>
        <authorList>
            <person name="Koegler E."/>
            <person name="Bonnon C."/>
            <person name="Waldmeier L."/>
            <person name="Mitrovic S."/>
            <person name="Halbeisen R."/>
            <person name="Hauri H.P."/>
        </authorList>
    </citation>
    <scope>FUNCTION</scope>
    <scope>SUBCELLULAR LOCATION</scope>
    <scope>INTERACTION WITH TMED9 AND TMED10</scope>
</reference>
<reference key="9">
    <citation type="journal article" date="2011" name="BMC Syst. Biol.">
        <title>Initial characterization of the human central proteome.</title>
        <authorList>
            <person name="Burkard T.R."/>
            <person name="Planyavsky M."/>
            <person name="Kaupe I."/>
            <person name="Breitwieser F.P."/>
            <person name="Buerckstuemmer T."/>
            <person name="Bennett K.L."/>
            <person name="Superti-Furga G."/>
            <person name="Colinge J."/>
        </authorList>
    </citation>
    <scope>IDENTIFICATION BY MASS SPECTROMETRY [LARGE SCALE ANALYSIS]</scope>
</reference>
<reference key="10">
    <citation type="journal article" date="2014" name="J. Proteomics">
        <title>An enzyme assisted RP-RPLC approach for in-depth analysis of human liver phosphoproteome.</title>
        <authorList>
            <person name="Bian Y."/>
            <person name="Song C."/>
            <person name="Cheng K."/>
            <person name="Dong M."/>
            <person name="Wang F."/>
            <person name="Huang J."/>
            <person name="Sun D."/>
            <person name="Wang L."/>
            <person name="Ye M."/>
            <person name="Zou H."/>
        </authorList>
    </citation>
    <scope>IDENTIFICATION BY MASS SPECTROMETRY [LARGE SCALE ANALYSIS]</scope>
    <source>
        <tissue>Liver</tissue>
    </source>
</reference>
<reference key="11">
    <citation type="journal article" date="2015" name="Proteomics">
        <title>N-terminome analysis of the human mitochondrial proteome.</title>
        <authorList>
            <person name="Vaca Jacome A.S."/>
            <person name="Rabilloud T."/>
            <person name="Schaeffer-Reiss C."/>
            <person name="Rompais M."/>
            <person name="Ayoub D."/>
            <person name="Lane L."/>
            <person name="Bairoch A."/>
            <person name="Van Dorsselaer A."/>
            <person name="Carapito C."/>
        </authorList>
    </citation>
    <scope>CLEAVAGE OF SIGNAL PEPTIDE [LARGE SCALE ANALYSIS] AFTER GLY-27</scope>
    <scope>IDENTIFICATION BY MASS SPECTROMETRY [LARGE SCALE ANALYSIS]</scope>
</reference>
<organism>
    <name type="scientific">Homo sapiens</name>
    <name type="common">Human</name>
    <dbReference type="NCBI Taxonomy" id="9606"/>
    <lineage>
        <taxon>Eukaryota</taxon>
        <taxon>Metazoa</taxon>
        <taxon>Chordata</taxon>
        <taxon>Craniata</taxon>
        <taxon>Vertebrata</taxon>
        <taxon>Euteleostomi</taxon>
        <taxon>Mammalia</taxon>
        <taxon>Eutheria</taxon>
        <taxon>Euarchontoglires</taxon>
        <taxon>Primates</taxon>
        <taxon>Haplorrhini</taxon>
        <taxon>Catarrhini</taxon>
        <taxon>Hominidae</taxon>
        <taxon>Homo</taxon>
    </lineage>
</organism>
<comment type="function">
    <text evidence="6">Potential role in vesicular protein trafficking, mainly in the early secretory pathway. Required for the maintenance of the Golgi apparatus; involved in protein exchange between Golgi stacks during assembly. Probably not required for COPI-vesicle-mediated retrograde transport.</text>
</comment>
<comment type="subunit">
    <text evidence="6">Interacts with TMED9 and TMED10.</text>
</comment>
<comment type="interaction">
    <interactant intactId="EBI-7560959">
        <id>Q9Y3A6</id>
    </interactant>
    <interactant intactId="EBI-3911467">
        <id>Q07325</id>
        <label>CXCL9</label>
    </interactant>
    <organismsDiffer>false</organismsDiffer>
    <experiments>3</experiments>
</comment>
<comment type="interaction">
    <interactant intactId="EBI-7560959">
        <id>Q9Y3A6</id>
    </interactant>
    <interactant intactId="EBI-912440">
        <id>Q96LA8</id>
        <label>PRMT6</label>
    </interactant>
    <organismsDiffer>false</organismsDiffer>
    <experiments>2</experiments>
</comment>
<comment type="subcellular location">
    <subcellularLocation>
        <location evidence="6">Endoplasmic reticulum membrane</location>
        <topology evidence="6">Single-pass type I membrane protein</topology>
    </subcellularLocation>
    <subcellularLocation>
        <location evidence="6">Golgi apparatus</location>
        <location evidence="6">cis-Golgi network membrane</location>
        <topology evidence="6">Single-pass type I membrane protein</topology>
    </subcellularLocation>
    <subcellularLocation>
        <location evidence="6">Endoplasmic reticulum-Golgi intermediate compartment membrane</location>
        <topology evidence="6">Single-pass type I membrane protein</topology>
    </subcellularLocation>
    <text>Probably cycles between compartments of the early secretatory pathway.</text>
</comment>
<comment type="alternative products">
    <event type="alternative splicing"/>
    <isoform>
        <id>Q9Y3A6-1</id>
        <name>1</name>
        <sequence type="displayed"/>
    </isoform>
    <isoform>
        <id>Q9Y3A6-2</id>
        <name>2</name>
        <sequence type="described" ref="VSP_046365"/>
    </isoform>
</comment>
<comment type="similarity">
    <text evidence="8">Belongs to the EMP24/GP25L family.</text>
</comment>
<protein>
    <recommendedName>
        <fullName>Transmembrane emp24 domain-containing protein 5</fullName>
    </recommendedName>
    <alternativeName>
        <fullName>p24 family protein gamma-2</fullName>
        <shortName>p24gamma2</shortName>
    </alternativeName>
    <alternativeName>
        <fullName>p28</fullName>
    </alternativeName>
</protein>
<feature type="signal peptide" evidence="1 9">
    <location>
        <begin position="1"/>
        <end position="27"/>
    </location>
</feature>
<feature type="chain" id="PRO_0000010389" description="Transmembrane emp24 domain-containing protein 5">
    <location>
        <begin position="28"/>
        <end position="229"/>
    </location>
</feature>
<feature type="topological domain" description="Lumenal" evidence="1">
    <location>
        <begin position="28"/>
        <end position="196"/>
    </location>
</feature>
<feature type="transmembrane region" description="Helical" evidence="1">
    <location>
        <begin position="197"/>
        <end position="217"/>
    </location>
</feature>
<feature type="topological domain" description="Cytoplasmic" evidence="1">
    <location>
        <begin position="218"/>
        <end position="229"/>
    </location>
</feature>
<feature type="domain" description="GOLD" evidence="2">
    <location>
        <begin position="45"/>
        <end position="126"/>
    </location>
</feature>
<feature type="splice variant" id="VSP_046365" description="In isoform 2." evidence="7">
    <original>ESINSIKSRLSKSGHIQTLLRAFEARDRNIQESNFDRVNFWSMVNLVVMVVVSAIQVYMLKSLFEDKRKSRT</original>
    <variation>DPIIKIASDVQIRLHLGIHQQHQVQTKQKWAHTNSA</variation>
    <location>
        <begin position="158"/>
        <end position="229"/>
    </location>
</feature>
<feature type="sequence variant" id="VAR_017150" description="In dbSNP:rs1060622." evidence="3 4 5">
    <original>T</original>
    <variation>I</variation>
    <location>
        <position position="175"/>
    </location>
</feature>
<keyword id="KW-0025">Alternative splicing</keyword>
<keyword id="KW-0256">Endoplasmic reticulum</keyword>
<keyword id="KW-0333">Golgi apparatus</keyword>
<keyword id="KW-0472">Membrane</keyword>
<keyword id="KW-0653">Protein transport</keyword>
<keyword id="KW-1267">Proteomics identification</keyword>
<keyword id="KW-1185">Reference proteome</keyword>
<keyword id="KW-0732">Signal</keyword>
<keyword id="KW-0812">Transmembrane</keyword>
<keyword id="KW-1133">Transmembrane helix</keyword>
<keyword id="KW-0813">Transport</keyword>
<name>TMED5_HUMAN</name>
<proteinExistence type="evidence at protein level"/>
<gene>
    <name type="primary">TMED5</name>
    <name type="ORF">CGI-100</name>
    <name type="ORF">UNQ397/PRO733</name>
</gene>